<keyword id="KW-0238">DNA-binding</keyword>
<keyword id="KW-0408">Iron</keyword>
<keyword id="KW-0411">Iron-sulfur</keyword>
<keyword id="KW-0479">Metal-binding</keyword>
<keyword id="KW-0678">Repressor</keyword>
<keyword id="KW-0804">Transcription</keyword>
<keyword id="KW-0805">Transcription regulation</keyword>
<dbReference type="EMBL" id="CP001144">
    <property type="protein sequence ID" value="ACH77766.1"/>
    <property type="molecule type" value="Genomic_DNA"/>
</dbReference>
<dbReference type="RefSeq" id="WP_000157587.1">
    <property type="nucleotide sequence ID" value="NC_011205.1"/>
</dbReference>
<dbReference type="SMR" id="B5FJS8"/>
<dbReference type="KEGG" id="sed:SeD_A3876"/>
<dbReference type="HOGENOM" id="CLU_189182_0_0_6"/>
<dbReference type="Proteomes" id="UP000008322">
    <property type="component" value="Chromosome"/>
</dbReference>
<dbReference type="GO" id="GO:0003677">
    <property type="term" value="F:DNA binding"/>
    <property type="evidence" value="ECO:0007669"/>
    <property type="project" value="UniProtKB-KW"/>
</dbReference>
<dbReference type="GO" id="GO:0005506">
    <property type="term" value="F:iron ion binding"/>
    <property type="evidence" value="ECO:0007669"/>
    <property type="project" value="UniProtKB-UniRule"/>
</dbReference>
<dbReference type="GO" id="GO:0051536">
    <property type="term" value="F:iron-sulfur cluster binding"/>
    <property type="evidence" value="ECO:0007669"/>
    <property type="project" value="UniProtKB-KW"/>
</dbReference>
<dbReference type="Gene3D" id="1.10.10.10">
    <property type="entry name" value="Winged helix-like DNA-binding domain superfamily/Winged helix DNA-binding domain"/>
    <property type="match status" value="1"/>
</dbReference>
<dbReference type="HAMAP" id="MF_01586">
    <property type="entry name" value="FeoC"/>
    <property type="match status" value="1"/>
</dbReference>
<dbReference type="InterPro" id="IPR023732">
    <property type="entry name" value="FeoC"/>
</dbReference>
<dbReference type="InterPro" id="IPR015102">
    <property type="entry name" value="Tscrpt_reg_HTH_FeoC"/>
</dbReference>
<dbReference type="InterPro" id="IPR036388">
    <property type="entry name" value="WH-like_DNA-bd_sf"/>
</dbReference>
<dbReference type="InterPro" id="IPR036390">
    <property type="entry name" value="WH_DNA-bd_sf"/>
</dbReference>
<dbReference type="NCBIfam" id="NF011960">
    <property type="entry name" value="PRK15431.1"/>
    <property type="match status" value="1"/>
</dbReference>
<dbReference type="Pfam" id="PF09012">
    <property type="entry name" value="FeoC"/>
    <property type="match status" value="1"/>
</dbReference>
<dbReference type="SUPFAM" id="SSF46785">
    <property type="entry name" value="Winged helix' DNA-binding domain"/>
    <property type="match status" value="1"/>
</dbReference>
<proteinExistence type="inferred from homology"/>
<organism>
    <name type="scientific">Salmonella dublin (strain CT_02021853)</name>
    <dbReference type="NCBI Taxonomy" id="439851"/>
    <lineage>
        <taxon>Bacteria</taxon>
        <taxon>Pseudomonadati</taxon>
        <taxon>Pseudomonadota</taxon>
        <taxon>Gammaproteobacteria</taxon>
        <taxon>Enterobacterales</taxon>
        <taxon>Enterobacteriaceae</taxon>
        <taxon>Salmonella</taxon>
    </lineage>
</organism>
<evidence type="ECO:0000255" key="1">
    <source>
        <dbReference type="HAMAP-Rule" id="MF_01586"/>
    </source>
</evidence>
<protein>
    <recommendedName>
        <fullName evidence="1">Probable [Fe-S]-dependent transcriptional repressor</fullName>
    </recommendedName>
</protein>
<accession>B5FJS8</accession>
<feature type="chain" id="PRO_1000201331" description="Probable [Fe-S]-dependent transcriptional repressor">
    <location>
        <begin position="1"/>
        <end position="78"/>
    </location>
</feature>
<feature type="binding site" evidence="1">
    <location>
        <position position="56"/>
    </location>
    <ligand>
        <name>iron-sulfur cluster</name>
        <dbReference type="ChEBI" id="CHEBI:30408"/>
    </ligand>
</feature>
<feature type="binding site" evidence="1">
    <location>
        <position position="61"/>
    </location>
    <ligand>
        <name>iron-sulfur cluster</name>
        <dbReference type="ChEBI" id="CHEBI:30408"/>
    </ligand>
</feature>
<feature type="binding site" evidence="1">
    <location>
        <position position="64"/>
    </location>
    <ligand>
        <name>iron-sulfur cluster</name>
        <dbReference type="ChEBI" id="CHEBI:30408"/>
    </ligand>
</feature>
<feature type="binding site" evidence="1">
    <location>
        <position position="70"/>
    </location>
    <ligand>
        <name>iron-sulfur cluster</name>
        <dbReference type="ChEBI" id="CHEBI:30408"/>
    </ligand>
</feature>
<reference key="1">
    <citation type="journal article" date="2011" name="J. Bacteriol.">
        <title>Comparative genomics of 28 Salmonella enterica isolates: evidence for CRISPR-mediated adaptive sublineage evolution.</title>
        <authorList>
            <person name="Fricke W.F."/>
            <person name="Mammel M.K."/>
            <person name="McDermott P.F."/>
            <person name="Tartera C."/>
            <person name="White D.G."/>
            <person name="Leclerc J.E."/>
            <person name="Ravel J."/>
            <person name="Cebula T.A."/>
        </authorList>
    </citation>
    <scope>NUCLEOTIDE SEQUENCE [LARGE SCALE GENOMIC DNA]</scope>
    <source>
        <strain>CT_02021853</strain>
    </source>
</reference>
<sequence length="78" mass="8648">MASLIQVRDLLALRGRMEATQISHTLHAPQPMIDAMLNQLEIMGKAVRIPEEADGCLSGSCKSCPEGKACLREWWALR</sequence>
<gene>
    <name evidence="1" type="primary">feoC</name>
    <name type="ordered locus">SeD_A3876</name>
</gene>
<name>FEOC_SALDC</name>
<comment type="function">
    <text evidence="1">May function as a transcriptional regulator that controls feoABC expression.</text>
</comment>
<comment type="similarity">
    <text evidence="1">Belongs to the FeoC family.</text>
</comment>